<comment type="function">
    <text evidence="2 4">Component of the multi-pass translocon (MPT) complex that mediates insertion of multi-pass membrane proteins into the lipid bilayer of membranes (By similarity). The MPT complex takes over after the SEC61 complex: following membrane insertion of the first few transmembrane segments of proteins by the SEC61 complex, the MPT complex occludes the lateral gate of the SEC61 complex to promote insertion of subsequent transmembrane regions (By similarity). Within the MPT complex, the GEL subcomplex may mediate insertion of transmembrane regions into the membrane (By similarity). In addition to its role in multi-pass membrane insertion, RAB5IF/OPTI also acts as an assembly factor for mitochondrial respiratory complexes (PubMed:31536960).</text>
</comment>
<comment type="subunit">
    <text evidence="2 4">Component of the GET- and EMC-like (GEL) complex, composed of RAB5IF/OPTI and TMCO1 (By similarity). The GEL complex is part of the multi-pass translocon (MPT) complex, composed of three subcomplexes, the GEL complex (composed of RAB5IF/OPTI and TMCO1), the BOS complex (composed of NCLN/Nicalin, NOMO1 and TMEM147) and the PAT complex (composed of WDR83OS/Asterix and CCDC47) (By similarity). The MPT complex associates with the SEC61 complex (By similarity). Interacts with NDUFS3, NDUFA4, NDUFV1, NDUFA9 and NDUFS8 of the mitochondrial membrane respiratory chain NADH dehydrogenase (Complex I) (PubMed:31536960). Interacts with UQCRC2 of the ubiquinol-cytochrome c reductase complex (Complex III) (PubMed:31536960). Interacts with COX5A and COX7C of the cytochrome c oxidase complex (Complex IV) (PubMed:31536960).</text>
</comment>
<comment type="subcellular location">
    <subcellularLocation>
        <location evidence="1">Endoplasmic reticulum membrane</location>
        <topology evidence="3">Multi-pass membrane protein</topology>
    </subcellularLocation>
    <subcellularLocation>
        <location evidence="4">Mitochondrion inner membrane</location>
        <topology evidence="3">Multi-pass membrane protein</topology>
    </subcellularLocation>
</comment>
<comment type="tissue specificity">
    <text evidence="4">Expressed in neuronal cells.</text>
</comment>
<comment type="similarity">
    <text evidence="5">Belongs to the EMC6 family.</text>
</comment>
<feature type="chain" id="PRO_0000079416" description="GEL complex subunit OPTI">
    <location>
        <begin position="1"/>
        <end position="129"/>
    </location>
</feature>
<feature type="topological domain" description="Cytoplasmic" evidence="1">
    <location>
        <begin position="1"/>
        <end position="44"/>
    </location>
</feature>
<feature type="transmembrane region" description="Helical" evidence="1">
    <location>
        <begin position="45"/>
        <end position="65"/>
    </location>
</feature>
<feature type="topological domain" description="Lumenal" evidence="1">
    <location>
        <position position="66"/>
    </location>
</feature>
<feature type="transmembrane region" description="Helical" evidence="1">
    <location>
        <begin position="67"/>
        <end position="84"/>
    </location>
</feature>
<feature type="topological domain" description="Cytoplasmic" evidence="1">
    <location>
        <begin position="85"/>
        <end position="103"/>
    </location>
</feature>
<feature type="transmembrane region" description="Helical" evidence="1">
    <location>
        <begin position="104"/>
        <end position="127"/>
    </location>
</feature>
<feature type="topological domain" description="Lumenal" evidence="1">
    <location>
        <begin position="128"/>
        <end position="129"/>
    </location>
</feature>
<protein>
    <recommendedName>
        <fullName evidence="5">GEL complex subunit OPTI</fullName>
    </recommendedName>
    <alternativeName>
        <fullName evidence="2">Obligate partner of TMCO1 insertase</fullName>
    </alternativeName>
    <alternativeName>
        <fullName evidence="6">Rab5-interacting protein</fullName>
        <shortName evidence="6">RIP5</shortName>
    </alternativeName>
    <alternativeName>
        <fullName evidence="2">Respirasome Complex Assembly Factor 1</fullName>
        <shortName evidence="2">RCAF1</shortName>
    </alternativeName>
</protein>
<gene>
    <name evidence="6" type="primary">Rab5if</name>
    <name evidence="2" type="synonym">Rcaf1</name>
</gene>
<evidence type="ECO:0000250" key="1">
    <source>
        <dbReference type="UniProtKB" id="A0A8I3S9V6"/>
    </source>
</evidence>
<evidence type="ECO:0000250" key="2">
    <source>
        <dbReference type="UniProtKB" id="Q9BUV8"/>
    </source>
</evidence>
<evidence type="ECO:0000255" key="3"/>
<evidence type="ECO:0000269" key="4">
    <source>
    </source>
</evidence>
<evidence type="ECO:0000305" key="5"/>
<evidence type="ECO:0000312" key="6">
    <source>
        <dbReference type="MGI" id="MGI:1914638"/>
    </source>
</evidence>
<name>RCAF1_MOUSE</name>
<accession>Q9CQT9</accession>
<keyword id="KW-0256">Endoplasmic reticulum</keyword>
<keyword id="KW-0472">Membrane</keyword>
<keyword id="KW-0496">Mitochondrion</keyword>
<keyword id="KW-0999">Mitochondrion inner membrane</keyword>
<keyword id="KW-1185">Reference proteome</keyword>
<keyword id="KW-0812">Transmembrane</keyword>
<keyword id="KW-1133">Transmembrane helix</keyword>
<dbReference type="EMBL" id="AK003568">
    <property type="protein sequence ID" value="BAB22864.1"/>
    <property type="molecule type" value="mRNA"/>
</dbReference>
<dbReference type="EMBL" id="AK002452">
    <property type="protein sequence ID" value="BAB22111.1"/>
    <property type="molecule type" value="mRNA"/>
</dbReference>
<dbReference type="EMBL" id="BC019445">
    <property type="protein sequence ID" value="AAH19445.1"/>
    <property type="molecule type" value="mRNA"/>
</dbReference>
<dbReference type="CCDS" id="CCDS16970.1"/>
<dbReference type="RefSeq" id="NP_080400.1">
    <property type="nucleotide sequence ID" value="NM_026124.3"/>
</dbReference>
<dbReference type="SMR" id="Q9CQT9"/>
<dbReference type="BioGRID" id="212152">
    <property type="interactions" value="1"/>
</dbReference>
<dbReference type="FunCoup" id="Q9CQT9">
    <property type="interactions" value="2796"/>
</dbReference>
<dbReference type="STRING" id="10090.ENSMUSP00000029165"/>
<dbReference type="iPTMnet" id="Q9CQT9"/>
<dbReference type="PhosphoSitePlus" id="Q9CQT9"/>
<dbReference type="PaxDb" id="10090-ENSMUSP00000029165"/>
<dbReference type="PeptideAtlas" id="Q9CQT9"/>
<dbReference type="Pumba" id="Q9CQT9"/>
<dbReference type="Antibodypedia" id="77474">
    <property type="antibodies" value="3 antibodies from 1 providers"/>
</dbReference>
<dbReference type="DNASU" id="67388"/>
<dbReference type="Ensembl" id="ENSMUST00000029165.4">
    <property type="protein sequence ID" value="ENSMUSP00000029165.4"/>
    <property type="gene ID" value="ENSMUSG00000027637.4"/>
</dbReference>
<dbReference type="GeneID" id="67388"/>
<dbReference type="KEGG" id="mmu:67388"/>
<dbReference type="UCSC" id="uc008nob.2">
    <property type="organism name" value="mouse"/>
</dbReference>
<dbReference type="AGR" id="MGI:1914638"/>
<dbReference type="CTD" id="55969"/>
<dbReference type="MGI" id="MGI:1914638">
    <property type="gene designation" value="Rab5if"/>
</dbReference>
<dbReference type="VEuPathDB" id="HostDB:ENSMUSG00000027637"/>
<dbReference type="eggNOG" id="KOG3415">
    <property type="taxonomic scope" value="Eukaryota"/>
</dbReference>
<dbReference type="GeneTree" id="ENSGT00390000004786"/>
<dbReference type="HOGENOM" id="CLU_120704_1_0_1"/>
<dbReference type="InParanoid" id="Q9CQT9"/>
<dbReference type="OMA" id="ANSEWPD"/>
<dbReference type="OrthoDB" id="286395at2759"/>
<dbReference type="PhylomeDB" id="Q9CQT9"/>
<dbReference type="TreeFam" id="TF314558"/>
<dbReference type="Reactome" id="R-MMU-9864848">
    <property type="pathway name" value="Complex IV assembly"/>
</dbReference>
<dbReference type="BioGRID-ORCS" id="67388">
    <property type="hits" value="0 hits in 76 CRISPR screens"/>
</dbReference>
<dbReference type="PRO" id="PR:Q9CQT9"/>
<dbReference type="Proteomes" id="UP000000589">
    <property type="component" value="Chromosome 2"/>
</dbReference>
<dbReference type="RNAct" id="Q9CQT9">
    <property type="molecule type" value="protein"/>
</dbReference>
<dbReference type="Bgee" id="ENSMUSG00000027637">
    <property type="expression patterns" value="Expressed in primitive streak and 264 other cell types or tissues"/>
</dbReference>
<dbReference type="GO" id="GO:0005789">
    <property type="term" value="C:endoplasmic reticulum membrane"/>
    <property type="evidence" value="ECO:0007669"/>
    <property type="project" value="UniProtKB-SubCell"/>
</dbReference>
<dbReference type="GO" id="GO:0005743">
    <property type="term" value="C:mitochondrial inner membrane"/>
    <property type="evidence" value="ECO:0007669"/>
    <property type="project" value="UniProtKB-SubCell"/>
</dbReference>
<dbReference type="GO" id="GO:0005739">
    <property type="term" value="C:mitochondrion"/>
    <property type="evidence" value="ECO:0000315"/>
    <property type="project" value="UniProtKB"/>
</dbReference>
<dbReference type="GO" id="GO:0160064">
    <property type="term" value="C:multi-pass translocon complex"/>
    <property type="evidence" value="ECO:0000250"/>
    <property type="project" value="UniProtKB"/>
</dbReference>
<dbReference type="GO" id="GO:0097250">
    <property type="term" value="P:mitochondrial respirasome assembly"/>
    <property type="evidence" value="ECO:0000315"/>
    <property type="project" value="UniProtKB"/>
</dbReference>
<dbReference type="GO" id="GO:0160063">
    <property type="term" value="P:multi-pass transmembrane protein insertion into ER membrane"/>
    <property type="evidence" value="ECO:0000250"/>
    <property type="project" value="UniProtKB"/>
</dbReference>
<dbReference type="InterPro" id="IPR029008">
    <property type="entry name" value="EMC6-like"/>
</dbReference>
<dbReference type="InterPro" id="IPR010742">
    <property type="entry name" value="RCAF1"/>
</dbReference>
<dbReference type="PANTHER" id="PTHR12906:SF0">
    <property type="entry name" value="GEL COMPLEX SUBUNIT OPTI"/>
    <property type="match status" value="1"/>
</dbReference>
<dbReference type="PANTHER" id="PTHR12906">
    <property type="entry name" value="PROTEIN C20ORF24 RAB5-INTERACTING PROTEIN"/>
    <property type="match status" value="1"/>
</dbReference>
<dbReference type="Pfam" id="PF07019">
    <property type="entry name" value="EMC6"/>
    <property type="match status" value="1"/>
</dbReference>
<organism>
    <name type="scientific">Mus musculus</name>
    <name type="common">Mouse</name>
    <dbReference type="NCBI Taxonomy" id="10090"/>
    <lineage>
        <taxon>Eukaryota</taxon>
        <taxon>Metazoa</taxon>
        <taxon>Chordata</taxon>
        <taxon>Craniata</taxon>
        <taxon>Vertebrata</taxon>
        <taxon>Euteleostomi</taxon>
        <taxon>Mammalia</taxon>
        <taxon>Eutheria</taxon>
        <taxon>Euarchontoglires</taxon>
        <taxon>Glires</taxon>
        <taxon>Rodentia</taxon>
        <taxon>Myomorpha</taxon>
        <taxon>Muroidea</taxon>
        <taxon>Muridae</taxon>
        <taxon>Murinae</taxon>
        <taxon>Mus</taxon>
        <taxon>Mus</taxon>
    </lineage>
</organism>
<sequence>MSGGRRKEEPPQPQLANGALKVSVWSKVLRSDAAWDDKDEFLDVIYWFRQIIALVLGVIWGVLPLRGFLGIAGFCLINAGVLYLYFSNYLQIDEEEYGGTWELTKEGFMTSFALFMVIWIIFYTAIHYD</sequence>
<proteinExistence type="evidence at protein level"/>
<reference key="1">
    <citation type="journal article" date="2005" name="Science">
        <title>The transcriptional landscape of the mammalian genome.</title>
        <authorList>
            <person name="Carninci P."/>
            <person name="Kasukawa T."/>
            <person name="Katayama S."/>
            <person name="Gough J."/>
            <person name="Frith M.C."/>
            <person name="Maeda N."/>
            <person name="Oyama R."/>
            <person name="Ravasi T."/>
            <person name="Lenhard B."/>
            <person name="Wells C."/>
            <person name="Kodzius R."/>
            <person name="Shimokawa K."/>
            <person name="Bajic V.B."/>
            <person name="Brenner S.E."/>
            <person name="Batalov S."/>
            <person name="Forrest A.R."/>
            <person name="Zavolan M."/>
            <person name="Davis M.J."/>
            <person name="Wilming L.G."/>
            <person name="Aidinis V."/>
            <person name="Allen J.E."/>
            <person name="Ambesi-Impiombato A."/>
            <person name="Apweiler R."/>
            <person name="Aturaliya R.N."/>
            <person name="Bailey T.L."/>
            <person name="Bansal M."/>
            <person name="Baxter L."/>
            <person name="Beisel K.W."/>
            <person name="Bersano T."/>
            <person name="Bono H."/>
            <person name="Chalk A.M."/>
            <person name="Chiu K.P."/>
            <person name="Choudhary V."/>
            <person name="Christoffels A."/>
            <person name="Clutterbuck D.R."/>
            <person name="Crowe M.L."/>
            <person name="Dalla E."/>
            <person name="Dalrymple B.P."/>
            <person name="de Bono B."/>
            <person name="Della Gatta G."/>
            <person name="di Bernardo D."/>
            <person name="Down T."/>
            <person name="Engstrom P."/>
            <person name="Fagiolini M."/>
            <person name="Faulkner G."/>
            <person name="Fletcher C.F."/>
            <person name="Fukushima T."/>
            <person name="Furuno M."/>
            <person name="Futaki S."/>
            <person name="Gariboldi M."/>
            <person name="Georgii-Hemming P."/>
            <person name="Gingeras T.R."/>
            <person name="Gojobori T."/>
            <person name="Green R.E."/>
            <person name="Gustincich S."/>
            <person name="Harbers M."/>
            <person name="Hayashi Y."/>
            <person name="Hensch T.K."/>
            <person name="Hirokawa N."/>
            <person name="Hill D."/>
            <person name="Huminiecki L."/>
            <person name="Iacono M."/>
            <person name="Ikeo K."/>
            <person name="Iwama A."/>
            <person name="Ishikawa T."/>
            <person name="Jakt M."/>
            <person name="Kanapin A."/>
            <person name="Katoh M."/>
            <person name="Kawasawa Y."/>
            <person name="Kelso J."/>
            <person name="Kitamura H."/>
            <person name="Kitano H."/>
            <person name="Kollias G."/>
            <person name="Krishnan S.P."/>
            <person name="Kruger A."/>
            <person name="Kummerfeld S.K."/>
            <person name="Kurochkin I.V."/>
            <person name="Lareau L.F."/>
            <person name="Lazarevic D."/>
            <person name="Lipovich L."/>
            <person name="Liu J."/>
            <person name="Liuni S."/>
            <person name="McWilliam S."/>
            <person name="Madan Babu M."/>
            <person name="Madera M."/>
            <person name="Marchionni L."/>
            <person name="Matsuda H."/>
            <person name="Matsuzawa S."/>
            <person name="Miki H."/>
            <person name="Mignone F."/>
            <person name="Miyake S."/>
            <person name="Morris K."/>
            <person name="Mottagui-Tabar S."/>
            <person name="Mulder N."/>
            <person name="Nakano N."/>
            <person name="Nakauchi H."/>
            <person name="Ng P."/>
            <person name="Nilsson R."/>
            <person name="Nishiguchi S."/>
            <person name="Nishikawa S."/>
            <person name="Nori F."/>
            <person name="Ohara O."/>
            <person name="Okazaki Y."/>
            <person name="Orlando V."/>
            <person name="Pang K.C."/>
            <person name="Pavan W.J."/>
            <person name="Pavesi G."/>
            <person name="Pesole G."/>
            <person name="Petrovsky N."/>
            <person name="Piazza S."/>
            <person name="Reed J."/>
            <person name="Reid J.F."/>
            <person name="Ring B.Z."/>
            <person name="Ringwald M."/>
            <person name="Rost B."/>
            <person name="Ruan Y."/>
            <person name="Salzberg S.L."/>
            <person name="Sandelin A."/>
            <person name="Schneider C."/>
            <person name="Schoenbach C."/>
            <person name="Sekiguchi K."/>
            <person name="Semple C.A."/>
            <person name="Seno S."/>
            <person name="Sessa L."/>
            <person name="Sheng Y."/>
            <person name="Shibata Y."/>
            <person name="Shimada H."/>
            <person name="Shimada K."/>
            <person name="Silva D."/>
            <person name="Sinclair B."/>
            <person name="Sperling S."/>
            <person name="Stupka E."/>
            <person name="Sugiura K."/>
            <person name="Sultana R."/>
            <person name="Takenaka Y."/>
            <person name="Taki K."/>
            <person name="Tammoja K."/>
            <person name="Tan S.L."/>
            <person name="Tang S."/>
            <person name="Taylor M.S."/>
            <person name="Tegner J."/>
            <person name="Teichmann S.A."/>
            <person name="Ueda H.R."/>
            <person name="van Nimwegen E."/>
            <person name="Verardo R."/>
            <person name="Wei C.L."/>
            <person name="Yagi K."/>
            <person name="Yamanishi H."/>
            <person name="Zabarovsky E."/>
            <person name="Zhu S."/>
            <person name="Zimmer A."/>
            <person name="Hide W."/>
            <person name="Bult C."/>
            <person name="Grimmond S.M."/>
            <person name="Teasdale R.D."/>
            <person name="Liu E.T."/>
            <person name="Brusic V."/>
            <person name="Quackenbush J."/>
            <person name="Wahlestedt C."/>
            <person name="Mattick J.S."/>
            <person name="Hume D.A."/>
            <person name="Kai C."/>
            <person name="Sasaki D."/>
            <person name="Tomaru Y."/>
            <person name="Fukuda S."/>
            <person name="Kanamori-Katayama M."/>
            <person name="Suzuki M."/>
            <person name="Aoki J."/>
            <person name="Arakawa T."/>
            <person name="Iida J."/>
            <person name="Imamura K."/>
            <person name="Itoh M."/>
            <person name="Kato T."/>
            <person name="Kawaji H."/>
            <person name="Kawagashira N."/>
            <person name="Kawashima T."/>
            <person name="Kojima M."/>
            <person name="Kondo S."/>
            <person name="Konno H."/>
            <person name="Nakano K."/>
            <person name="Ninomiya N."/>
            <person name="Nishio T."/>
            <person name="Okada M."/>
            <person name="Plessy C."/>
            <person name="Shibata K."/>
            <person name="Shiraki T."/>
            <person name="Suzuki S."/>
            <person name="Tagami M."/>
            <person name="Waki K."/>
            <person name="Watahiki A."/>
            <person name="Okamura-Oho Y."/>
            <person name="Suzuki H."/>
            <person name="Kawai J."/>
            <person name="Hayashizaki Y."/>
        </authorList>
    </citation>
    <scope>NUCLEOTIDE SEQUENCE [LARGE SCALE MRNA]</scope>
    <source>
        <strain>C57BL/6J</strain>
        <tissue>Embryo</tissue>
        <tissue>Kidney</tissue>
    </source>
</reference>
<reference key="2">
    <citation type="journal article" date="2004" name="Genome Res.">
        <title>The status, quality, and expansion of the NIH full-length cDNA project: the Mammalian Gene Collection (MGC).</title>
        <authorList>
            <consortium name="The MGC Project Team"/>
        </authorList>
    </citation>
    <scope>NUCLEOTIDE SEQUENCE [LARGE SCALE MRNA]</scope>
    <source>
        <tissue>Liver</tissue>
    </source>
</reference>
<reference key="3">
    <citation type="journal article" date="2019" name="IScience">
        <title>Rewiring of the Human Mitochondrial Interactome during Neuronal Reprogramming Reveals Regulators of the Respirasome and Neurogenesis.</title>
        <authorList>
            <person name="Moutaoufik M.T."/>
            <person name="Malty R."/>
            <person name="Amin S."/>
            <person name="Zhang Q."/>
            <person name="Phanse S."/>
            <person name="Gagarinova A."/>
            <person name="Zilocchi M."/>
            <person name="Hoell L."/>
            <person name="Minic Z."/>
            <person name="Gagarinova M."/>
            <person name="Aoki H."/>
            <person name="Stockwell J."/>
            <person name="Jessulat M."/>
            <person name="Goebels F."/>
            <person name="Broderick K."/>
            <person name="Scott N.E."/>
            <person name="Vlasblom J."/>
            <person name="Musso G."/>
            <person name="Prasad B."/>
            <person name="Lamantea E."/>
            <person name="Garavaglia B."/>
            <person name="Rajput A."/>
            <person name="Murayama K."/>
            <person name="Okazaki Y."/>
            <person name="Foster L.J."/>
            <person name="Bader G.D."/>
            <person name="Cayabyab F.S."/>
            <person name="Babu M."/>
        </authorList>
    </citation>
    <scope>FUNCTION</scope>
    <scope>INTERACTION WITH NDUFS3; NDUFA4; NDUFV1; NDUFA9; NDUFS8; UQCRC2; COX5A AND COX7C</scope>
    <scope>SUBCELLULAR LOCATION</scope>
    <scope>TISSUE SPECIFICITY</scope>
</reference>